<organism>
    <name type="scientific">Synechococcus sp. (strain CC9605)</name>
    <dbReference type="NCBI Taxonomy" id="110662"/>
    <lineage>
        <taxon>Bacteria</taxon>
        <taxon>Bacillati</taxon>
        <taxon>Cyanobacteriota</taxon>
        <taxon>Cyanophyceae</taxon>
        <taxon>Synechococcales</taxon>
        <taxon>Synechococcaceae</taxon>
        <taxon>Synechococcus</taxon>
    </lineage>
</organism>
<sequence>MAPTLSADPADRIIVALDGMAPDQALRFAAHVDGLRWVKVGLELFVQAGPEVVAQLREQGLRVFLDLKFHDIPATMAGACRRAAALGAELITVHACAGSEALKAVKVAAEEGAQAAGQPAPTLLAVTVLTSWEEQRLQRELAIAQGIAERVPALAQLSATAGIGGCVCSPLEAAALRAQHPQPFALVTPGIRPRGAAVGDQARVMGPAEAIAAGASQLVIGRPISKAEDPSAAFAACCGDL</sequence>
<gene>
    <name evidence="1" type="primary">pyrF</name>
    <name type="ordered locus">Syncc9605_2100</name>
</gene>
<reference key="1">
    <citation type="submission" date="2005-07" db="EMBL/GenBank/DDBJ databases">
        <title>Complete sequence of Synechococcus sp. CC9605.</title>
        <authorList>
            <consortium name="US DOE Joint Genome Institute"/>
            <person name="Copeland A."/>
            <person name="Lucas S."/>
            <person name="Lapidus A."/>
            <person name="Barry K."/>
            <person name="Detter J.C."/>
            <person name="Glavina T."/>
            <person name="Hammon N."/>
            <person name="Israni S."/>
            <person name="Pitluck S."/>
            <person name="Schmutz J."/>
            <person name="Martinez M."/>
            <person name="Larimer F."/>
            <person name="Land M."/>
            <person name="Kyrpides N."/>
            <person name="Ivanova N."/>
            <person name="Richardson P."/>
        </authorList>
    </citation>
    <scope>NUCLEOTIDE SEQUENCE [LARGE SCALE GENOMIC DNA]</scope>
    <source>
        <strain>CC9605</strain>
    </source>
</reference>
<comment type="function">
    <text evidence="1">Catalyzes the decarboxylation of orotidine 5'-monophosphate (OMP) to uridine 5'-monophosphate (UMP).</text>
</comment>
<comment type="catalytic activity">
    <reaction evidence="1">
        <text>orotidine 5'-phosphate + H(+) = UMP + CO2</text>
        <dbReference type="Rhea" id="RHEA:11596"/>
        <dbReference type="ChEBI" id="CHEBI:15378"/>
        <dbReference type="ChEBI" id="CHEBI:16526"/>
        <dbReference type="ChEBI" id="CHEBI:57538"/>
        <dbReference type="ChEBI" id="CHEBI:57865"/>
        <dbReference type="EC" id="4.1.1.23"/>
    </reaction>
</comment>
<comment type="pathway">
    <text evidence="1">Pyrimidine metabolism; UMP biosynthesis via de novo pathway; UMP from orotate: step 2/2.</text>
</comment>
<comment type="subunit">
    <text evidence="1">Homodimer.</text>
</comment>
<comment type="similarity">
    <text evidence="1">Belongs to the OMP decarboxylase family. Type 1 subfamily.</text>
</comment>
<dbReference type="EC" id="4.1.1.23" evidence="1"/>
<dbReference type="EMBL" id="CP000110">
    <property type="protein sequence ID" value="ABB35840.1"/>
    <property type="molecule type" value="Genomic_DNA"/>
</dbReference>
<dbReference type="RefSeq" id="WP_011365048.1">
    <property type="nucleotide sequence ID" value="NC_007516.1"/>
</dbReference>
<dbReference type="SMR" id="Q3AHU2"/>
<dbReference type="STRING" id="110662.Syncc9605_2100"/>
<dbReference type="KEGG" id="syd:Syncc9605_2100"/>
<dbReference type="eggNOG" id="COG0284">
    <property type="taxonomic scope" value="Bacteria"/>
</dbReference>
<dbReference type="HOGENOM" id="CLU_067069_1_0_3"/>
<dbReference type="OrthoDB" id="9806203at2"/>
<dbReference type="UniPathway" id="UPA00070">
    <property type="reaction ID" value="UER00120"/>
</dbReference>
<dbReference type="GO" id="GO:0005829">
    <property type="term" value="C:cytosol"/>
    <property type="evidence" value="ECO:0007669"/>
    <property type="project" value="TreeGrafter"/>
</dbReference>
<dbReference type="GO" id="GO:0004590">
    <property type="term" value="F:orotidine-5'-phosphate decarboxylase activity"/>
    <property type="evidence" value="ECO:0007669"/>
    <property type="project" value="UniProtKB-UniRule"/>
</dbReference>
<dbReference type="GO" id="GO:0006207">
    <property type="term" value="P:'de novo' pyrimidine nucleobase biosynthetic process"/>
    <property type="evidence" value="ECO:0007669"/>
    <property type="project" value="InterPro"/>
</dbReference>
<dbReference type="GO" id="GO:0044205">
    <property type="term" value="P:'de novo' UMP biosynthetic process"/>
    <property type="evidence" value="ECO:0007669"/>
    <property type="project" value="UniProtKB-UniRule"/>
</dbReference>
<dbReference type="CDD" id="cd04725">
    <property type="entry name" value="OMP_decarboxylase_like"/>
    <property type="match status" value="1"/>
</dbReference>
<dbReference type="FunFam" id="3.20.20.70:FF:000015">
    <property type="entry name" value="Orotidine 5'-phosphate decarboxylase"/>
    <property type="match status" value="1"/>
</dbReference>
<dbReference type="Gene3D" id="3.20.20.70">
    <property type="entry name" value="Aldolase class I"/>
    <property type="match status" value="1"/>
</dbReference>
<dbReference type="HAMAP" id="MF_01200_B">
    <property type="entry name" value="OMPdecase_type1_B"/>
    <property type="match status" value="1"/>
</dbReference>
<dbReference type="InterPro" id="IPR013785">
    <property type="entry name" value="Aldolase_TIM"/>
</dbReference>
<dbReference type="InterPro" id="IPR014732">
    <property type="entry name" value="OMPdecase"/>
</dbReference>
<dbReference type="InterPro" id="IPR018089">
    <property type="entry name" value="OMPdecase_AS"/>
</dbReference>
<dbReference type="InterPro" id="IPR047596">
    <property type="entry name" value="OMPdecase_bac"/>
</dbReference>
<dbReference type="InterPro" id="IPR001754">
    <property type="entry name" value="OMPdeCOase_dom"/>
</dbReference>
<dbReference type="InterPro" id="IPR011060">
    <property type="entry name" value="RibuloseP-bd_barrel"/>
</dbReference>
<dbReference type="NCBIfam" id="NF001273">
    <property type="entry name" value="PRK00230.1"/>
    <property type="match status" value="1"/>
</dbReference>
<dbReference type="NCBIfam" id="TIGR01740">
    <property type="entry name" value="pyrF"/>
    <property type="match status" value="1"/>
</dbReference>
<dbReference type="PANTHER" id="PTHR32119">
    <property type="entry name" value="OROTIDINE 5'-PHOSPHATE DECARBOXYLASE"/>
    <property type="match status" value="1"/>
</dbReference>
<dbReference type="PANTHER" id="PTHR32119:SF2">
    <property type="entry name" value="OROTIDINE 5'-PHOSPHATE DECARBOXYLASE"/>
    <property type="match status" value="1"/>
</dbReference>
<dbReference type="Pfam" id="PF00215">
    <property type="entry name" value="OMPdecase"/>
    <property type="match status" value="1"/>
</dbReference>
<dbReference type="SMART" id="SM00934">
    <property type="entry name" value="OMPdecase"/>
    <property type="match status" value="1"/>
</dbReference>
<dbReference type="SUPFAM" id="SSF51366">
    <property type="entry name" value="Ribulose-phoshate binding barrel"/>
    <property type="match status" value="1"/>
</dbReference>
<dbReference type="PROSITE" id="PS00156">
    <property type="entry name" value="OMPDECASE"/>
    <property type="match status" value="1"/>
</dbReference>
<evidence type="ECO:0000255" key="1">
    <source>
        <dbReference type="HAMAP-Rule" id="MF_01200"/>
    </source>
</evidence>
<proteinExistence type="inferred from homology"/>
<protein>
    <recommendedName>
        <fullName evidence="1">Orotidine 5'-phosphate decarboxylase</fullName>
        <ecNumber evidence="1">4.1.1.23</ecNumber>
    </recommendedName>
    <alternativeName>
        <fullName evidence="1">OMP decarboxylase</fullName>
        <shortName evidence="1">OMPDCase</shortName>
        <shortName evidence="1">OMPdecase</shortName>
    </alternativeName>
</protein>
<feature type="chain" id="PRO_0000241917" description="Orotidine 5'-phosphate decarboxylase">
    <location>
        <begin position="1"/>
        <end position="241"/>
    </location>
</feature>
<feature type="active site" description="Proton donor" evidence="1">
    <location>
        <position position="68"/>
    </location>
</feature>
<feature type="binding site" evidence="1">
    <location>
        <position position="18"/>
    </location>
    <ligand>
        <name>substrate</name>
    </ligand>
</feature>
<feature type="binding site" evidence="1">
    <location>
        <position position="39"/>
    </location>
    <ligand>
        <name>substrate</name>
    </ligand>
</feature>
<feature type="binding site" evidence="1">
    <location>
        <begin position="66"/>
        <end position="75"/>
    </location>
    <ligand>
        <name>substrate</name>
    </ligand>
</feature>
<feature type="binding site" evidence="1">
    <location>
        <position position="130"/>
    </location>
    <ligand>
        <name>substrate</name>
    </ligand>
</feature>
<feature type="binding site" evidence="1">
    <location>
        <position position="192"/>
    </location>
    <ligand>
        <name>substrate</name>
    </ligand>
</feature>
<feature type="binding site" evidence="1">
    <location>
        <position position="201"/>
    </location>
    <ligand>
        <name>substrate</name>
    </ligand>
</feature>
<feature type="binding site" evidence="1">
    <location>
        <position position="221"/>
    </location>
    <ligand>
        <name>substrate</name>
    </ligand>
</feature>
<feature type="binding site" evidence="1">
    <location>
        <position position="222"/>
    </location>
    <ligand>
        <name>substrate</name>
    </ligand>
</feature>
<name>PYRF_SYNSC</name>
<accession>Q3AHU2</accession>
<keyword id="KW-0210">Decarboxylase</keyword>
<keyword id="KW-0456">Lyase</keyword>
<keyword id="KW-0665">Pyrimidine biosynthesis</keyword>